<comment type="function">
    <text>Involved in positive regulation of the levanase operon which comprises the levDEFG genes for a fructose PTS system, and sacA for levanase.</text>
</comment>
<comment type="domain">
    <text evidence="1">The PTS EIIA type-4 domain may serve a regulatory function, through its phosphorylation activity.</text>
</comment>
<comment type="PTM">
    <text>Possibly phosphorylated and inactivated by the PTS system.</text>
</comment>
<comment type="similarity">
    <text evidence="5">Belongs to the transcriptional antiterminator BglG family.</text>
</comment>
<comment type="sequence caution" evidence="5">
    <conflict type="erroneous initiation">
        <sequence resource="EMBL-CDS" id="AAA22572"/>
    </conflict>
</comment>
<comment type="sequence caution" evidence="5">
    <conflict type="erroneous initiation">
        <sequence resource="EMBL-CDS" id="CAA63460"/>
    </conflict>
</comment>
<protein>
    <recommendedName>
        <fullName>Transcriptional regulatory protein LevR</fullName>
    </recommendedName>
    <domain>
        <recommendedName>
            <fullName>Putative phosphotransferase EIIA component</fullName>
            <ecNumber>2.7.1.-</ecNumber>
        </recommendedName>
        <alternativeName>
            <fullName>Putative PTS system EIIA component</fullName>
        </alternativeName>
    </domain>
</protein>
<proteinExistence type="inferred from homology"/>
<organism>
    <name type="scientific">Bacillus subtilis (strain 168)</name>
    <dbReference type="NCBI Taxonomy" id="224308"/>
    <lineage>
        <taxon>Bacteria</taxon>
        <taxon>Bacillati</taxon>
        <taxon>Bacillota</taxon>
        <taxon>Bacilli</taxon>
        <taxon>Bacillales</taxon>
        <taxon>Bacillaceae</taxon>
        <taxon>Bacillus</taxon>
    </lineage>
</organism>
<sequence>MRRIDKIYHQLKHNFHDSTLDHLLKIQGNSAKEIAEQLKMERSNVSFELNNLVRSKKVIKIKTFPVRYIPVEIAEKLFNKKWDTEMMEVKDLQAFSGNSKQNHQHISTNPLELMIGAKGSLKKAISQAKAAVFYPPNGLHMLLLGPTGSGKSLFANRIYQFAIYSDILKAGAPFITFNCADYYNNPQLLLSQLFGHKKGSFTGAAEDKAGLVEQANGGILFMDEIHRLPPEGQEMLFYFIDSGSYNRLGESEHKRTSNVLFICATTENPSSALLKTFLRRIPMTIHIPSLEERSLNERVDLTTFLLGKEAERIKKNLSVHIDVYNALIHSAKFGNVGQLKSNVQLVCAHGFLHNLDRNEVIELTVRDLPDEIKQEWMSSSKNMQRSKAISEYVNITTIISPIVEDETTKIDEDLSFNLYHLIEEKVKTLMKEGLSKKDINQYILTDVHLHVRSFFHHQAFQKDNLLTFVEDDVIQMTKQLKEIAEHELDCTFDRKFIYFLSMHIDAFLKRGKQIDVLNTQETDEIRDTHVKEYRVAMIFKDKIQEYFKVAIPEIEVIYLTMLIHSIKSLKENKRVGIIVAAHGNSTASSMVEVATELLGSTPIAAVDMPLTVSPSDILECVAEKMKQVDEGEGVLMLVDMGSLAMLESRLEEKTGISIKTISNVTTSMVLDAVRKVNYLNLNLHAIYQSVTKDFIELWERQPAASGKKKALVSICTTGSGTAKKLEDILTTIVNKASDTPIHILTVSSIKLANSIKEIEKEYEILATVGTKDPKINAPHVSLEVLIEGEGEKLIQQAITKGSISLSNGLNEANIIVRELCEDSLKKYLVFLNPHHVIDMLLEWLQTVQDELGVIFNNAVLIKVIMHTAFAFERVIKQNPIAFSEEEEINDQLKEMVYVTERTLAPYEEKLGLRISDDEKLFIAAIFAEEVHGQLF</sequence>
<evidence type="ECO:0000250" key="1"/>
<evidence type="ECO:0000255" key="2">
    <source>
        <dbReference type="PROSITE-ProRule" id="PRU00193"/>
    </source>
</evidence>
<evidence type="ECO:0000255" key="3">
    <source>
        <dbReference type="PROSITE-ProRule" id="PRU00419"/>
    </source>
</evidence>
<evidence type="ECO:0000255" key="4">
    <source>
        <dbReference type="PROSITE-ProRule" id="PRU00704"/>
    </source>
</evidence>
<evidence type="ECO:0000305" key="5"/>
<feature type="chain" id="PRO_0000204250" description="Transcriptional regulatory protein LevR">
    <location>
        <begin position="1"/>
        <end position="935"/>
    </location>
</feature>
<feature type="domain" description="Sigma-54 factor interaction" evidence="2">
    <location>
        <begin position="117"/>
        <end position="348"/>
    </location>
</feature>
<feature type="domain" description="PRD 1" evidence="4">
    <location>
        <begin position="468"/>
        <end position="573"/>
    </location>
</feature>
<feature type="domain" description="PTS EIIA type-4" evidence="3">
    <location>
        <begin position="574"/>
        <end position="711"/>
    </location>
</feature>
<feature type="domain" description="PRD 2" evidence="4">
    <location>
        <begin position="831"/>
        <end position="935"/>
    </location>
</feature>
<feature type="binding site" evidence="2">
    <location>
        <begin position="145"/>
        <end position="152"/>
    </location>
    <ligand>
        <name>ATP</name>
        <dbReference type="ChEBI" id="CHEBI:30616"/>
    </ligand>
</feature>
<feature type="binding site" evidence="2">
    <location>
        <begin position="215"/>
        <end position="224"/>
    </location>
    <ligand>
        <name>ATP</name>
        <dbReference type="ChEBI" id="CHEBI:30616"/>
    </ligand>
</feature>
<feature type="modified residue" description="Phosphohistidine" evidence="4">
    <location>
        <position position="503"/>
    </location>
</feature>
<feature type="modified residue" description="Phosphohistidine; by HPr" evidence="4">
    <location>
        <position position="582"/>
    </location>
</feature>
<feature type="modified residue" description="Phosphohistidine" evidence="4">
    <location>
        <position position="866"/>
    </location>
</feature>
<feature type="sequence conflict" description="In Ref. 1; AAA22572 and 2; CAA63460." evidence="5" ref="1 2">
    <original>S</original>
    <variation>L</variation>
    <location>
        <position position="883"/>
    </location>
</feature>
<accession>P23914</accession>
<name>LEVR_BACSU</name>
<gene>
    <name type="primary">levR</name>
    <name type="ordered locus">BSU27080</name>
</gene>
<dbReference type="EC" id="2.7.1.-"/>
<dbReference type="EMBL" id="M60105">
    <property type="protein sequence ID" value="AAA22572.1"/>
    <property type="status" value="ALT_INIT"/>
    <property type="molecule type" value="Genomic_DNA"/>
</dbReference>
<dbReference type="EMBL" id="X92868">
    <property type="protein sequence ID" value="CAA63460.1"/>
    <property type="status" value="ALT_INIT"/>
    <property type="molecule type" value="Genomic_DNA"/>
</dbReference>
<dbReference type="EMBL" id="AL009126">
    <property type="protein sequence ID" value="CAB14650.2"/>
    <property type="molecule type" value="Genomic_DNA"/>
</dbReference>
<dbReference type="PIR" id="A39160">
    <property type="entry name" value="A39160"/>
</dbReference>
<dbReference type="RefSeq" id="NP_390586.2">
    <property type="nucleotide sequence ID" value="NC_000964.3"/>
</dbReference>
<dbReference type="RefSeq" id="WP_003229830.1">
    <property type="nucleotide sequence ID" value="NZ_OZ025638.1"/>
</dbReference>
<dbReference type="SMR" id="P23914"/>
<dbReference type="FunCoup" id="P23914">
    <property type="interactions" value="6"/>
</dbReference>
<dbReference type="STRING" id="224308.BSU27080"/>
<dbReference type="PaxDb" id="224308-BSU27080"/>
<dbReference type="EnsemblBacteria" id="CAB14650">
    <property type="protein sequence ID" value="CAB14650"/>
    <property type="gene ID" value="BSU_27080"/>
</dbReference>
<dbReference type="GeneID" id="937594"/>
<dbReference type="KEGG" id="bsu:BSU27080"/>
<dbReference type="PATRIC" id="fig|224308.179.peg.2941"/>
<dbReference type="eggNOG" id="COG1221">
    <property type="taxonomic scope" value="Bacteria"/>
</dbReference>
<dbReference type="eggNOG" id="COG3933">
    <property type="taxonomic scope" value="Bacteria"/>
</dbReference>
<dbReference type="InParanoid" id="P23914"/>
<dbReference type="OrthoDB" id="9771372at2"/>
<dbReference type="PhylomeDB" id="P23914"/>
<dbReference type="BioCyc" id="BSUB:BSU27080-MONOMER"/>
<dbReference type="Proteomes" id="UP000001570">
    <property type="component" value="Chromosome"/>
</dbReference>
<dbReference type="GO" id="GO:0016020">
    <property type="term" value="C:membrane"/>
    <property type="evidence" value="ECO:0007669"/>
    <property type="project" value="InterPro"/>
</dbReference>
<dbReference type="GO" id="GO:0032993">
    <property type="term" value="C:protein-DNA complex"/>
    <property type="evidence" value="ECO:0000318"/>
    <property type="project" value="GO_Central"/>
</dbReference>
<dbReference type="GO" id="GO:0005524">
    <property type="term" value="F:ATP binding"/>
    <property type="evidence" value="ECO:0007669"/>
    <property type="project" value="UniProtKB-KW"/>
</dbReference>
<dbReference type="GO" id="GO:0016887">
    <property type="term" value="F:ATP hydrolysis activity"/>
    <property type="evidence" value="ECO:0007669"/>
    <property type="project" value="InterPro"/>
</dbReference>
<dbReference type="GO" id="GO:0000987">
    <property type="term" value="F:cis-regulatory region sequence-specific DNA binding"/>
    <property type="evidence" value="ECO:0000318"/>
    <property type="project" value="GO_Central"/>
</dbReference>
<dbReference type="GO" id="GO:0001216">
    <property type="term" value="F:DNA-binding transcription activator activity"/>
    <property type="evidence" value="ECO:0000318"/>
    <property type="project" value="GO_Central"/>
</dbReference>
<dbReference type="GO" id="GO:0016301">
    <property type="term" value="F:kinase activity"/>
    <property type="evidence" value="ECO:0007669"/>
    <property type="project" value="UniProtKB-KW"/>
</dbReference>
<dbReference type="GO" id="GO:0003723">
    <property type="term" value="F:RNA binding"/>
    <property type="evidence" value="ECO:0007669"/>
    <property type="project" value="InterPro"/>
</dbReference>
<dbReference type="GO" id="GO:0009401">
    <property type="term" value="P:phosphoenolpyruvate-dependent sugar phosphotransferase system"/>
    <property type="evidence" value="ECO:0007669"/>
    <property type="project" value="InterPro"/>
</dbReference>
<dbReference type="GO" id="GO:0045893">
    <property type="term" value="P:positive regulation of DNA-templated transcription"/>
    <property type="evidence" value="ECO:0000318"/>
    <property type="project" value="GO_Central"/>
</dbReference>
<dbReference type="CDD" id="cd00009">
    <property type="entry name" value="AAA"/>
    <property type="match status" value="1"/>
</dbReference>
<dbReference type="CDD" id="cd00006">
    <property type="entry name" value="PTS_IIA_man"/>
    <property type="match status" value="1"/>
</dbReference>
<dbReference type="Gene3D" id="3.40.50.300">
    <property type="entry name" value="P-loop containing nucleotide triphosphate hydrolases"/>
    <property type="match status" value="1"/>
</dbReference>
<dbReference type="Gene3D" id="3.40.50.510">
    <property type="entry name" value="Phosphotransferase system, mannose-type IIA component"/>
    <property type="match status" value="1"/>
</dbReference>
<dbReference type="Gene3D" id="1.10.1790.10">
    <property type="entry name" value="PRD domain"/>
    <property type="match status" value="2"/>
</dbReference>
<dbReference type="InterPro" id="IPR003593">
    <property type="entry name" value="AAA+_ATPase"/>
</dbReference>
<dbReference type="InterPro" id="IPR027417">
    <property type="entry name" value="P-loop_NTPase"/>
</dbReference>
<dbReference type="InterPro" id="IPR011608">
    <property type="entry name" value="PRD"/>
</dbReference>
<dbReference type="InterPro" id="IPR036634">
    <property type="entry name" value="PRD_sf"/>
</dbReference>
<dbReference type="InterPro" id="IPR004701">
    <property type="entry name" value="PTS_EIIA_man-typ"/>
</dbReference>
<dbReference type="InterPro" id="IPR036662">
    <property type="entry name" value="PTS_EIIA_man-typ_sf"/>
</dbReference>
<dbReference type="InterPro" id="IPR033887">
    <property type="entry name" value="PTS_IIA_man"/>
</dbReference>
<dbReference type="InterPro" id="IPR002078">
    <property type="entry name" value="Sigma_54_int"/>
</dbReference>
<dbReference type="InterPro" id="IPR025943">
    <property type="entry name" value="Sigma_54_int_dom_ATP-bd_2"/>
</dbReference>
<dbReference type="InterPro" id="IPR001550">
    <property type="entry name" value="Transcrpt_antitermin_CS"/>
</dbReference>
<dbReference type="InterPro" id="IPR036390">
    <property type="entry name" value="WH_DNA-bd_sf"/>
</dbReference>
<dbReference type="PANTHER" id="PTHR32071">
    <property type="entry name" value="TRANSCRIPTIONAL REGULATORY PROTEIN"/>
    <property type="match status" value="1"/>
</dbReference>
<dbReference type="PANTHER" id="PTHR32071:SF90">
    <property type="entry name" value="TRANSCRIPTIONAL REGULATORY PROTEIN LEVR"/>
    <property type="match status" value="1"/>
</dbReference>
<dbReference type="Pfam" id="PF03610">
    <property type="entry name" value="EIIA-man"/>
    <property type="match status" value="1"/>
</dbReference>
<dbReference type="Pfam" id="PF00874">
    <property type="entry name" value="PRD"/>
    <property type="match status" value="2"/>
</dbReference>
<dbReference type="Pfam" id="PF00158">
    <property type="entry name" value="Sigma54_activat"/>
    <property type="match status" value="1"/>
</dbReference>
<dbReference type="SMART" id="SM00382">
    <property type="entry name" value="AAA"/>
    <property type="match status" value="1"/>
</dbReference>
<dbReference type="SUPFAM" id="SSF52540">
    <property type="entry name" value="P-loop containing nucleoside triphosphate hydrolases"/>
    <property type="match status" value="1"/>
</dbReference>
<dbReference type="SUPFAM" id="SSF53062">
    <property type="entry name" value="PTS system fructose IIA component-like"/>
    <property type="match status" value="1"/>
</dbReference>
<dbReference type="SUPFAM" id="SSF63520">
    <property type="entry name" value="PTS-regulatory domain, PRD"/>
    <property type="match status" value="2"/>
</dbReference>
<dbReference type="SUPFAM" id="SSF46785">
    <property type="entry name" value="Winged helix' DNA-binding domain"/>
    <property type="match status" value="1"/>
</dbReference>
<dbReference type="PROSITE" id="PS00654">
    <property type="entry name" value="PRD_1"/>
    <property type="match status" value="1"/>
</dbReference>
<dbReference type="PROSITE" id="PS51372">
    <property type="entry name" value="PRD_2"/>
    <property type="match status" value="2"/>
</dbReference>
<dbReference type="PROSITE" id="PS51096">
    <property type="entry name" value="PTS_EIIA_TYPE_4"/>
    <property type="match status" value="1"/>
</dbReference>
<dbReference type="PROSITE" id="PS00676">
    <property type="entry name" value="SIGMA54_INTERACT_2"/>
    <property type="match status" value="1"/>
</dbReference>
<dbReference type="PROSITE" id="PS50045">
    <property type="entry name" value="SIGMA54_INTERACT_4"/>
    <property type="match status" value="1"/>
</dbReference>
<keyword id="KW-0010">Activator</keyword>
<keyword id="KW-0067">ATP-binding</keyword>
<keyword id="KW-0238">DNA-binding</keyword>
<keyword id="KW-0418">Kinase</keyword>
<keyword id="KW-0547">Nucleotide-binding</keyword>
<keyword id="KW-0597">Phosphoprotein</keyword>
<keyword id="KW-1185">Reference proteome</keyword>
<keyword id="KW-0677">Repeat</keyword>
<keyword id="KW-0804">Transcription</keyword>
<keyword id="KW-0805">Transcription regulation</keyword>
<keyword id="KW-0808">Transferase</keyword>
<reference key="1">
    <citation type="journal article" date="1991" name="Proc. Natl. Acad. Sci. U.S.A.">
        <title>The transcriptional regulator LevR of Bacillus subtilis has domains homologous to both sigma 54- and phosphotransferase system-dependent regulators.</title>
        <authorList>
            <person name="Debarbouille M."/>
            <person name="Martin-Verstraete I."/>
            <person name="Klier A."/>
            <person name="Rapoport G."/>
        </authorList>
    </citation>
    <scope>NUCLEOTIDE SEQUENCE [GENOMIC DNA]</scope>
</reference>
<reference key="2">
    <citation type="journal article" date="1997" name="Microbiology">
        <title>A 23911 bp region of the Bacillus subtilis genome comprising genes located upstream and downstream of the lev operon.</title>
        <authorList>
            <person name="Parro V."/>
            <person name="San Roman M."/>
            <person name="Galindo I."/>
            <person name="Purnelle B."/>
            <person name="Bolotin A."/>
            <person name="Sorokin A."/>
            <person name="Mellado R.P."/>
        </authorList>
    </citation>
    <scope>NUCLEOTIDE SEQUENCE [GENOMIC DNA]</scope>
    <source>
        <strain>168</strain>
    </source>
</reference>
<reference key="3">
    <citation type="journal article" date="1997" name="Nature">
        <title>The complete genome sequence of the Gram-positive bacterium Bacillus subtilis.</title>
        <authorList>
            <person name="Kunst F."/>
            <person name="Ogasawara N."/>
            <person name="Moszer I."/>
            <person name="Albertini A.M."/>
            <person name="Alloni G."/>
            <person name="Azevedo V."/>
            <person name="Bertero M.G."/>
            <person name="Bessieres P."/>
            <person name="Bolotin A."/>
            <person name="Borchert S."/>
            <person name="Borriss R."/>
            <person name="Boursier L."/>
            <person name="Brans A."/>
            <person name="Braun M."/>
            <person name="Brignell S.C."/>
            <person name="Bron S."/>
            <person name="Brouillet S."/>
            <person name="Bruschi C.V."/>
            <person name="Caldwell B."/>
            <person name="Capuano V."/>
            <person name="Carter N.M."/>
            <person name="Choi S.-K."/>
            <person name="Codani J.-J."/>
            <person name="Connerton I.F."/>
            <person name="Cummings N.J."/>
            <person name="Daniel R.A."/>
            <person name="Denizot F."/>
            <person name="Devine K.M."/>
            <person name="Duesterhoeft A."/>
            <person name="Ehrlich S.D."/>
            <person name="Emmerson P.T."/>
            <person name="Entian K.-D."/>
            <person name="Errington J."/>
            <person name="Fabret C."/>
            <person name="Ferrari E."/>
            <person name="Foulger D."/>
            <person name="Fritz C."/>
            <person name="Fujita M."/>
            <person name="Fujita Y."/>
            <person name="Fuma S."/>
            <person name="Galizzi A."/>
            <person name="Galleron N."/>
            <person name="Ghim S.-Y."/>
            <person name="Glaser P."/>
            <person name="Goffeau A."/>
            <person name="Golightly E.J."/>
            <person name="Grandi G."/>
            <person name="Guiseppi G."/>
            <person name="Guy B.J."/>
            <person name="Haga K."/>
            <person name="Haiech J."/>
            <person name="Harwood C.R."/>
            <person name="Henaut A."/>
            <person name="Hilbert H."/>
            <person name="Holsappel S."/>
            <person name="Hosono S."/>
            <person name="Hullo M.-F."/>
            <person name="Itaya M."/>
            <person name="Jones L.-M."/>
            <person name="Joris B."/>
            <person name="Karamata D."/>
            <person name="Kasahara Y."/>
            <person name="Klaerr-Blanchard M."/>
            <person name="Klein C."/>
            <person name="Kobayashi Y."/>
            <person name="Koetter P."/>
            <person name="Koningstein G."/>
            <person name="Krogh S."/>
            <person name="Kumano M."/>
            <person name="Kurita K."/>
            <person name="Lapidus A."/>
            <person name="Lardinois S."/>
            <person name="Lauber J."/>
            <person name="Lazarevic V."/>
            <person name="Lee S.-M."/>
            <person name="Levine A."/>
            <person name="Liu H."/>
            <person name="Masuda S."/>
            <person name="Mauel C."/>
            <person name="Medigue C."/>
            <person name="Medina N."/>
            <person name="Mellado R.P."/>
            <person name="Mizuno M."/>
            <person name="Moestl D."/>
            <person name="Nakai S."/>
            <person name="Noback M."/>
            <person name="Noone D."/>
            <person name="O'Reilly M."/>
            <person name="Ogawa K."/>
            <person name="Ogiwara A."/>
            <person name="Oudega B."/>
            <person name="Park S.-H."/>
            <person name="Parro V."/>
            <person name="Pohl T.M."/>
            <person name="Portetelle D."/>
            <person name="Porwollik S."/>
            <person name="Prescott A.M."/>
            <person name="Presecan E."/>
            <person name="Pujic P."/>
            <person name="Purnelle B."/>
            <person name="Rapoport G."/>
            <person name="Rey M."/>
            <person name="Reynolds S."/>
            <person name="Rieger M."/>
            <person name="Rivolta C."/>
            <person name="Rocha E."/>
            <person name="Roche B."/>
            <person name="Rose M."/>
            <person name="Sadaie Y."/>
            <person name="Sato T."/>
            <person name="Scanlan E."/>
            <person name="Schleich S."/>
            <person name="Schroeter R."/>
            <person name="Scoffone F."/>
            <person name="Sekiguchi J."/>
            <person name="Sekowska A."/>
            <person name="Seror S.J."/>
            <person name="Serror P."/>
            <person name="Shin B.-S."/>
            <person name="Soldo B."/>
            <person name="Sorokin A."/>
            <person name="Tacconi E."/>
            <person name="Takagi T."/>
            <person name="Takahashi H."/>
            <person name="Takemaru K."/>
            <person name="Takeuchi M."/>
            <person name="Tamakoshi A."/>
            <person name="Tanaka T."/>
            <person name="Terpstra P."/>
            <person name="Tognoni A."/>
            <person name="Tosato V."/>
            <person name="Uchiyama S."/>
            <person name="Vandenbol M."/>
            <person name="Vannier F."/>
            <person name="Vassarotti A."/>
            <person name="Viari A."/>
            <person name="Wambutt R."/>
            <person name="Wedler E."/>
            <person name="Wedler H."/>
            <person name="Weitzenegger T."/>
            <person name="Winters P."/>
            <person name="Wipat A."/>
            <person name="Yamamoto H."/>
            <person name="Yamane K."/>
            <person name="Yasumoto K."/>
            <person name="Yata K."/>
            <person name="Yoshida K."/>
            <person name="Yoshikawa H.-F."/>
            <person name="Zumstein E."/>
            <person name="Yoshikawa H."/>
            <person name="Danchin A."/>
        </authorList>
    </citation>
    <scope>NUCLEOTIDE SEQUENCE [LARGE SCALE GENOMIC DNA]</scope>
    <source>
        <strain>168</strain>
    </source>
</reference>
<reference key="4">
    <citation type="journal article" date="2009" name="Microbiology">
        <title>From a consortium sequence to a unified sequence: the Bacillus subtilis 168 reference genome a decade later.</title>
        <authorList>
            <person name="Barbe V."/>
            <person name="Cruveiller S."/>
            <person name="Kunst F."/>
            <person name="Lenoble P."/>
            <person name="Meurice G."/>
            <person name="Sekowska A."/>
            <person name="Vallenet D."/>
            <person name="Wang T."/>
            <person name="Moszer I."/>
            <person name="Medigue C."/>
            <person name="Danchin A."/>
        </authorList>
    </citation>
    <scope>SEQUENCE REVISION TO 883</scope>
</reference>